<dbReference type="EMBL" id="CP000891">
    <property type="protein sequence ID" value="ABX47922.1"/>
    <property type="molecule type" value="Genomic_DNA"/>
</dbReference>
<dbReference type="RefSeq" id="WP_006086059.1">
    <property type="nucleotide sequence ID" value="NC_009997.1"/>
</dbReference>
<dbReference type="SMR" id="A9L123"/>
<dbReference type="GeneID" id="11771054"/>
<dbReference type="KEGG" id="sbn:Sbal195_0744"/>
<dbReference type="HOGENOM" id="CLU_078938_4_1_6"/>
<dbReference type="Proteomes" id="UP000000770">
    <property type="component" value="Chromosome"/>
</dbReference>
<dbReference type="GO" id="GO:1990904">
    <property type="term" value="C:ribonucleoprotein complex"/>
    <property type="evidence" value="ECO:0007669"/>
    <property type="project" value="UniProtKB-KW"/>
</dbReference>
<dbReference type="GO" id="GO:0005840">
    <property type="term" value="C:ribosome"/>
    <property type="evidence" value="ECO:0007669"/>
    <property type="project" value="UniProtKB-KW"/>
</dbReference>
<dbReference type="GO" id="GO:0019843">
    <property type="term" value="F:rRNA binding"/>
    <property type="evidence" value="ECO:0007669"/>
    <property type="project" value="UniProtKB-UniRule"/>
</dbReference>
<dbReference type="GO" id="GO:0003735">
    <property type="term" value="F:structural constituent of ribosome"/>
    <property type="evidence" value="ECO:0007669"/>
    <property type="project" value="InterPro"/>
</dbReference>
<dbReference type="GO" id="GO:0006412">
    <property type="term" value="P:translation"/>
    <property type="evidence" value="ECO:0007669"/>
    <property type="project" value="UniProtKB-UniRule"/>
</dbReference>
<dbReference type="FunFam" id="3.10.430.100:FF:000001">
    <property type="entry name" value="50S ribosomal protein L9"/>
    <property type="match status" value="1"/>
</dbReference>
<dbReference type="FunFam" id="3.40.5.10:FF:000001">
    <property type="entry name" value="50S ribosomal protein L9"/>
    <property type="match status" value="1"/>
</dbReference>
<dbReference type="Gene3D" id="3.10.430.100">
    <property type="entry name" value="Ribosomal protein L9, C-terminal domain"/>
    <property type="match status" value="1"/>
</dbReference>
<dbReference type="Gene3D" id="3.40.5.10">
    <property type="entry name" value="Ribosomal protein L9, N-terminal domain"/>
    <property type="match status" value="1"/>
</dbReference>
<dbReference type="HAMAP" id="MF_00503">
    <property type="entry name" value="Ribosomal_bL9"/>
    <property type="match status" value="1"/>
</dbReference>
<dbReference type="InterPro" id="IPR000244">
    <property type="entry name" value="Ribosomal_bL9"/>
</dbReference>
<dbReference type="InterPro" id="IPR009027">
    <property type="entry name" value="Ribosomal_bL9/RNase_H1_N"/>
</dbReference>
<dbReference type="InterPro" id="IPR020594">
    <property type="entry name" value="Ribosomal_bL9_bac/chp"/>
</dbReference>
<dbReference type="InterPro" id="IPR020069">
    <property type="entry name" value="Ribosomal_bL9_C"/>
</dbReference>
<dbReference type="InterPro" id="IPR036791">
    <property type="entry name" value="Ribosomal_bL9_C_sf"/>
</dbReference>
<dbReference type="InterPro" id="IPR020070">
    <property type="entry name" value="Ribosomal_bL9_N"/>
</dbReference>
<dbReference type="InterPro" id="IPR036935">
    <property type="entry name" value="Ribosomal_bL9_N_sf"/>
</dbReference>
<dbReference type="NCBIfam" id="TIGR00158">
    <property type="entry name" value="L9"/>
    <property type="match status" value="1"/>
</dbReference>
<dbReference type="PANTHER" id="PTHR21368">
    <property type="entry name" value="50S RIBOSOMAL PROTEIN L9"/>
    <property type="match status" value="1"/>
</dbReference>
<dbReference type="Pfam" id="PF03948">
    <property type="entry name" value="Ribosomal_L9_C"/>
    <property type="match status" value="1"/>
</dbReference>
<dbReference type="Pfam" id="PF01281">
    <property type="entry name" value="Ribosomal_L9_N"/>
    <property type="match status" value="1"/>
</dbReference>
<dbReference type="SUPFAM" id="SSF55658">
    <property type="entry name" value="L9 N-domain-like"/>
    <property type="match status" value="1"/>
</dbReference>
<dbReference type="SUPFAM" id="SSF55653">
    <property type="entry name" value="Ribosomal protein L9 C-domain"/>
    <property type="match status" value="1"/>
</dbReference>
<dbReference type="PROSITE" id="PS00651">
    <property type="entry name" value="RIBOSOMAL_L9"/>
    <property type="match status" value="1"/>
</dbReference>
<evidence type="ECO:0000255" key="1">
    <source>
        <dbReference type="HAMAP-Rule" id="MF_00503"/>
    </source>
</evidence>
<evidence type="ECO:0000305" key="2"/>
<feature type="chain" id="PRO_1000081500" description="Large ribosomal subunit protein bL9">
    <location>
        <begin position="1"/>
        <end position="150"/>
    </location>
</feature>
<proteinExistence type="inferred from homology"/>
<protein>
    <recommendedName>
        <fullName evidence="1">Large ribosomal subunit protein bL9</fullName>
    </recommendedName>
    <alternativeName>
        <fullName evidence="2">50S ribosomal protein L9</fullName>
    </alternativeName>
</protein>
<accession>A9L123</accession>
<reference key="1">
    <citation type="submission" date="2007-11" db="EMBL/GenBank/DDBJ databases">
        <title>Complete sequence of chromosome of Shewanella baltica OS195.</title>
        <authorList>
            <consortium name="US DOE Joint Genome Institute"/>
            <person name="Copeland A."/>
            <person name="Lucas S."/>
            <person name="Lapidus A."/>
            <person name="Barry K."/>
            <person name="Glavina del Rio T."/>
            <person name="Dalin E."/>
            <person name="Tice H."/>
            <person name="Pitluck S."/>
            <person name="Chain P."/>
            <person name="Malfatti S."/>
            <person name="Shin M."/>
            <person name="Vergez L."/>
            <person name="Schmutz J."/>
            <person name="Larimer F."/>
            <person name="Land M."/>
            <person name="Hauser L."/>
            <person name="Kyrpides N."/>
            <person name="Kim E."/>
            <person name="Brettar I."/>
            <person name="Rodrigues J."/>
            <person name="Konstantinidis K."/>
            <person name="Klappenbach J."/>
            <person name="Hofle M."/>
            <person name="Tiedje J."/>
            <person name="Richardson P."/>
        </authorList>
    </citation>
    <scope>NUCLEOTIDE SEQUENCE [LARGE SCALE GENOMIC DNA]</scope>
    <source>
        <strain>OS195</strain>
    </source>
</reference>
<gene>
    <name evidence="1" type="primary">rplI</name>
    <name type="ordered locus">Sbal195_0744</name>
</gene>
<organism>
    <name type="scientific">Shewanella baltica (strain OS195)</name>
    <dbReference type="NCBI Taxonomy" id="399599"/>
    <lineage>
        <taxon>Bacteria</taxon>
        <taxon>Pseudomonadati</taxon>
        <taxon>Pseudomonadota</taxon>
        <taxon>Gammaproteobacteria</taxon>
        <taxon>Alteromonadales</taxon>
        <taxon>Shewanellaceae</taxon>
        <taxon>Shewanella</taxon>
    </lineage>
</organism>
<comment type="function">
    <text evidence="1">Binds to the 23S rRNA.</text>
</comment>
<comment type="similarity">
    <text evidence="1">Belongs to the bacterial ribosomal protein bL9 family.</text>
</comment>
<keyword id="KW-0687">Ribonucleoprotein</keyword>
<keyword id="KW-0689">Ribosomal protein</keyword>
<keyword id="KW-0694">RNA-binding</keyword>
<keyword id="KW-0699">rRNA-binding</keyword>
<name>RL9_SHEB9</name>
<sequence length="150" mass="15677">MNVILLDKIANLGNLGDQVSVKAGYARNFLLPQGKAVVANESNVKVFEARRAELEAKLAAELAAANLRAEKITALEAVVIASKAGDEGKLFGSVGNRDIADAVTAAGVELAKSEVRLPLGALRTTGDFEVEVQLHTEVKAVVKVSVVAEA</sequence>